<sequence>MRLNTLSPAAGSKPSKKRVGRGIGSGLGKTGGRGHKGQKSRSGGKVRAGFEGGQMPLKQRLPKFGFTSRKSLVTAEVRLSELAKVEGNVIDLNSLKAANVITKNIEFAKVVLSGEIATAVTVKGLRVTKGAKAAIEAAGGKIEE</sequence>
<gene>
    <name evidence="1" type="primary">rplO</name>
    <name type="ordered locus">VFMJ11_0244</name>
</gene>
<keyword id="KW-0687">Ribonucleoprotein</keyword>
<keyword id="KW-0689">Ribosomal protein</keyword>
<keyword id="KW-0694">RNA-binding</keyword>
<keyword id="KW-0699">rRNA-binding</keyword>
<comment type="function">
    <text evidence="1">Binds to the 23S rRNA.</text>
</comment>
<comment type="subunit">
    <text evidence="1">Part of the 50S ribosomal subunit.</text>
</comment>
<comment type="similarity">
    <text evidence="1">Belongs to the universal ribosomal protein uL15 family.</text>
</comment>
<protein>
    <recommendedName>
        <fullName evidence="1">Large ribosomal subunit protein uL15</fullName>
    </recommendedName>
    <alternativeName>
        <fullName evidence="3">50S ribosomal protein L15</fullName>
    </alternativeName>
</protein>
<reference key="1">
    <citation type="submission" date="2008-08" db="EMBL/GenBank/DDBJ databases">
        <title>Complete sequence of Vibrio fischeri strain MJ11.</title>
        <authorList>
            <person name="Mandel M.J."/>
            <person name="Stabb E.V."/>
            <person name="Ruby E.G."/>
            <person name="Ferriera S."/>
            <person name="Johnson J."/>
            <person name="Kravitz S."/>
            <person name="Beeson K."/>
            <person name="Sutton G."/>
            <person name="Rogers Y.-H."/>
            <person name="Friedman R."/>
            <person name="Frazier M."/>
            <person name="Venter J.C."/>
        </authorList>
    </citation>
    <scope>NUCLEOTIDE SEQUENCE [LARGE SCALE GENOMIC DNA]</scope>
    <source>
        <strain>MJ11</strain>
    </source>
</reference>
<evidence type="ECO:0000255" key="1">
    <source>
        <dbReference type="HAMAP-Rule" id="MF_01341"/>
    </source>
</evidence>
<evidence type="ECO:0000256" key="2">
    <source>
        <dbReference type="SAM" id="MobiDB-lite"/>
    </source>
</evidence>
<evidence type="ECO:0000305" key="3"/>
<accession>B5FGD5</accession>
<name>RL15_ALIFM</name>
<dbReference type="EMBL" id="CP001139">
    <property type="protein sequence ID" value="ACH65071.1"/>
    <property type="molecule type" value="Genomic_DNA"/>
</dbReference>
<dbReference type="RefSeq" id="WP_005417259.1">
    <property type="nucleotide sequence ID" value="NC_011184.1"/>
</dbReference>
<dbReference type="SMR" id="B5FGD5"/>
<dbReference type="GeneID" id="54162877"/>
<dbReference type="KEGG" id="vfm:VFMJ11_0244"/>
<dbReference type="HOGENOM" id="CLU_055188_4_2_6"/>
<dbReference type="Proteomes" id="UP000001857">
    <property type="component" value="Chromosome I"/>
</dbReference>
<dbReference type="GO" id="GO:0022625">
    <property type="term" value="C:cytosolic large ribosomal subunit"/>
    <property type="evidence" value="ECO:0007669"/>
    <property type="project" value="TreeGrafter"/>
</dbReference>
<dbReference type="GO" id="GO:0019843">
    <property type="term" value="F:rRNA binding"/>
    <property type="evidence" value="ECO:0007669"/>
    <property type="project" value="UniProtKB-UniRule"/>
</dbReference>
<dbReference type="GO" id="GO:0003735">
    <property type="term" value="F:structural constituent of ribosome"/>
    <property type="evidence" value="ECO:0007669"/>
    <property type="project" value="InterPro"/>
</dbReference>
<dbReference type="GO" id="GO:0006412">
    <property type="term" value="P:translation"/>
    <property type="evidence" value="ECO:0007669"/>
    <property type="project" value="UniProtKB-UniRule"/>
</dbReference>
<dbReference type="FunFam" id="3.100.10.10:FF:000003">
    <property type="entry name" value="50S ribosomal protein L15"/>
    <property type="match status" value="1"/>
</dbReference>
<dbReference type="Gene3D" id="3.100.10.10">
    <property type="match status" value="1"/>
</dbReference>
<dbReference type="HAMAP" id="MF_01341">
    <property type="entry name" value="Ribosomal_uL15"/>
    <property type="match status" value="1"/>
</dbReference>
<dbReference type="InterPro" id="IPR030878">
    <property type="entry name" value="Ribosomal_uL15"/>
</dbReference>
<dbReference type="InterPro" id="IPR021131">
    <property type="entry name" value="Ribosomal_uL15/eL18"/>
</dbReference>
<dbReference type="InterPro" id="IPR036227">
    <property type="entry name" value="Ribosomal_uL15/eL18_sf"/>
</dbReference>
<dbReference type="InterPro" id="IPR005749">
    <property type="entry name" value="Ribosomal_uL15_bac-type"/>
</dbReference>
<dbReference type="InterPro" id="IPR001196">
    <property type="entry name" value="Ribosomal_uL15_CS"/>
</dbReference>
<dbReference type="NCBIfam" id="TIGR01071">
    <property type="entry name" value="rplO_bact"/>
    <property type="match status" value="1"/>
</dbReference>
<dbReference type="PANTHER" id="PTHR12934">
    <property type="entry name" value="50S RIBOSOMAL PROTEIN L15"/>
    <property type="match status" value="1"/>
</dbReference>
<dbReference type="PANTHER" id="PTHR12934:SF11">
    <property type="entry name" value="LARGE RIBOSOMAL SUBUNIT PROTEIN UL15M"/>
    <property type="match status" value="1"/>
</dbReference>
<dbReference type="Pfam" id="PF00828">
    <property type="entry name" value="Ribosomal_L27A"/>
    <property type="match status" value="1"/>
</dbReference>
<dbReference type="SUPFAM" id="SSF52080">
    <property type="entry name" value="Ribosomal proteins L15p and L18e"/>
    <property type="match status" value="1"/>
</dbReference>
<dbReference type="PROSITE" id="PS00475">
    <property type="entry name" value="RIBOSOMAL_L15"/>
    <property type="match status" value="1"/>
</dbReference>
<feature type="chain" id="PRO_1000142900" description="Large ribosomal subunit protein uL15">
    <location>
        <begin position="1"/>
        <end position="144"/>
    </location>
</feature>
<feature type="region of interest" description="Disordered" evidence="2">
    <location>
        <begin position="1"/>
        <end position="52"/>
    </location>
</feature>
<feature type="compositionally biased region" description="Gly residues" evidence="2">
    <location>
        <begin position="21"/>
        <end position="31"/>
    </location>
</feature>
<feature type="compositionally biased region" description="Basic residues" evidence="2">
    <location>
        <begin position="32"/>
        <end position="44"/>
    </location>
</feature>
<organism>
    <name type="scientific">Aliivibrio fischeri (strain MJ11)</name>
    <name type="common">Vibrio fischeri</name>
    <dbReference type="NCBI Taxonomy" id="388396"/>
    <lineage>
        <taxon>Bacteria</taxon>
        <taxon>Pseudomonadati</taxon>
        <taxon>Pseudomonadota</taxon>
        <taxon>Gammaproteobacteria</taxon>
        <taxon>Vibrionales</taxon>
        <taxon>Vibrionaceae</taxon>
        <taxon>Aliivibrio</taxon>
    </lineage>
</organism>
<proteinExistence type="inferred from homology"/>